<comment type="function">
    <text evidence="1">Involved in the gluconeogenesis. Catalyzes stereospecifically the conversion of dihydroxyacetone phosphate (DHAP) to D-glyceraldehyde-3-phosphate (G3P).</text>
</comment>
<comment type="catalytic activity">
    <reaction evidence="1">
        <text>D-glyceraldehyde 3-phosphate = dihydroxyacetone phosphate</text>
        <dbReference type="Rhea" id="RHEA:18585"/>
        <dbReference type="ChEBI" id="CHEBI:57642"/>
        <dbReference type="ChEBI" id="CHEBI:59776"/>
        <dbReference type="EC" id="5.3.1.1"/>
    </reaction>
</comment>
<comment type="pathway">
    <text evidence="1">Carbohydrate biosynthesis; gluconeogenesis.</text>
</comment>
<comment type="pathway">
    <text evidence="1">Carbohydrate degradation; glycolysis; D-glyceraldehyde 3-phosphate from glycerone phosphate: step 1/1.</text>
</comment>
<comment type="subunit">
    <text evidence="1">Homodimer.</text>
</comment>
<comment type="subcellular location">
    <subcellularLocation>
        <location evidence="1">Cytoplasm</location>
    </subcellularLocation>
</comment>
<comment type="similarity">
    <text evidence="1">Belongs to the triosephosphate isomerase family.</text>
</comment>
<accession>A0PYP2</accession>
<feature type="chain" id="PRO_1000071482" description="Triosephosphate isomerase">
    <location>
        <begin position="1"/>
        <end position="250"/>
    </location>
</feature>
<feature type="active site" description="Electrophile" evidence="1">
    <location>
        <position position="94"/>
    </location>
</feature>
<feature type="active site" description="Proton acceptor" evidence="1">
    <location>
        <position position="166"/>
    </location>
</feature>
<feature type="binding site" evidence="1">
    <location>
        <begin position="9"/>
        <end position="11"/>
    </location>
    <ligand>
        <name>substrate</name>
    </ligand>
</feature>
<feature type="binding site" evidence="1">
    <location>
        <position position="172"/>
    </location>
    <ligand>
        <name>substrate</name>
    </ligand>
</feature>
<feature type="binding site" evidence="1">
    <location>
        <position position="212"/>
    </location>
    <ligand>
        <name>substrate</name>
    </ligand>
</feature>
<feature type="binding site" evidence="1">
    <location>
        <begin position="233"/>
        <end position="234"/>
    </location>
    <ligand>
        <name>substrate</name>
    </ligand>
</feature>
<organism>
    <name type="scientific">Clostridium novyi (strain NT)</name>
    <dbReference type="NCBI Taxonomy" id="386415"/>
    <lineage>
        <taxon>Bacteria</taxon>
        <taxon>Bacillati</taxon>
        <taxon>Bacillota</taxon>
        <taxon>Clostridia</taxon>
        <taxon>Eubacteriales</taxon>
        <taxon>Clostridiaceae</taxon>
        <taxon>Clostridium</taxon>
    </lineage>
</organism>
<reference key="1">
    <citation type="journal article" date="2006" name="Nat. Biotechnol.">
        <title>The genome and transcriptomes of the anti-tumor agent Clostridium novyi-NT.</title>
        <authorList>
            <person name="Bettegowda C."/>
            <person name="Huang X."/>
            <person name="Lin J."/>
            <person name="Cheong I."/>
            <person name="Kohli M."/>
            <person name="Szabo S.A."/>
            <person name="Zhang X."/>
            <person name="Diaz L.A. Jr."/>
            <person name="Velculescu V.E."/>
            <person name="Parmigiani G."/>
            <person name="Kinzler K.W."/>
            <person name="Vogelstein B."/>
            <person name="Zhou S."/>
        </authorList>
    </citation>
    <scope>NUCLEOTIDE SEQUENCE [LARGE SCALE GENOMIC DNA]</scope>
    <source>
        <strain>NT</strain>
    </source>
</reference>
<protein>
    <recommendedName>
        <fullName evidence="1">Triosephosphate isomerase</fullName>
        <shortName evidence="1">TIM</shortName>
        <shortName evidence="1">TPI</shortName>
        <ecNumber evidence="1">5.3.1.1</ecNumber>
    </recommendedName>
    <alternativeName>
        <fullName evidence="1">Triose-phosphate isomerase</fullName>
    </alternativeName>
</protein>
<name>TPIS_CLONN</name>
<keyword id="KW-0963">Cytoplasm</keyword>
<keyword id="KW-0312">Gluconeogenesis</keyword>
<keyword id="KW-0324">Glycolysis</keyword>
<keyword id="KW-0413">Isomerase</keyword>
<keyword id="KW-1185">Reference proteome</keyword>
<evidence type="ECO:0000255" key="1">
    <source>
        <dbReference type="HAMAP-Rule" id="MF_00147"/>
    </source>
</evidence>
<gene>
    <name evidence="1" type="primary">tpiA</name>
    <name type="ordered locus">NT01CX_1412</name>
</gene>
<sequence>MRKAIIAGNWKMNNTISQGLKLVEELKPLVADANCDVVVCPPTLALDAVVKATEGTNIKVGAQNMHFEESGAFTGETAPAMLEELGVKYVILGHSERRQYFGENDADLNKKMKKAFEHNLTPILCIGETLEEREADVTEEVLAKQIKLDLAGLTEAQIAETVIAYEPIWAIGTGKTATSDQAEETIAFVRKTVAGMFGAEAAEKMRIQYGGSVKPATIKEQMAKPNIDGGLIGGASLKAADFAAIVNFDK</sequence>
<proteinExistence type="inferred from homology"/>
<dbReference type="EC" id="5.3.1.1" evidence="1"/>
<dbReference type="EMBL" id="CP000382">
    <property type="protein sequence ID" value="ABK60888.1"/>
    <property type="molecule type" value="Genomic_DNA"/>
</dbReference>
<dbReference type="RefSeq" id="WP_011721502.1">
    <property type="nucleotide sequence ID" value="NC_008593.1"/>
</dbReference>
<dbReference type="SMR" id="A0PYP2"/>
<dbReference type="STRING" id="386415.NT01CX_1412"/>
<dbReference type="KEGG" id="cno:NT01CX_1412"/>
<dbReference type="eggNOG" id="COG0149">
    <property type="taxonomic scope" value="Bacteria"/>
</dbReference>
<dbReference type="HOGENOM" id="CLU_024251_2_3_9"/>
<dbReference type="UniPathway" id="UPA00109">
    <property type="reaction ID" value="UER00189"/>
</dbReference>
<dbReference type="UniPathway" id="UPA00138"/>
<dbReference type="Proteomes" id="UP000008220">
    <property type="component" value="Chromosome"/>
</dbReference>
<dbReference type="GO" id="GO:0005829">
    <property type="term" value="C:cytosol"/>
    <property type="evidence" value="ECO:0007669"/>
    <property type="project" value="TreeGrafter"/>
</dbReference>
<dbReference type="GO" id="GO:0004807">
    <property type="term" value="F:triose-phosphate isomerase activity"/>
    <property type="evidence" value="ECO:0007669"/>
    <property type="project" value="UniProtKB-UniRule"/>
</dbReference>
<dbReference type="GO" id="GO:0006094">
    <property type="term" value="P:gluconeogenesis"/>
    <property type="evidence" value="ECO:0007669"/>
    <property type="project" value="UniProtKB-UniRule"/>
</dbReference>
<dbReference type="GO" id="GO:0046166">
    <property type="term" value="P:glyceraldehyde-3-phosphate biosynthetic process"/>
    <property type="evidence" value="ECO:0007669"/>
    <property type="project" value="TreeGrafter"/>
</dbReference>
<dbReference type="GO" id="GO:0019563">
    <property type="term" value="P:glycerol catabolic process"/>
    <property type="evidence" value="ECO:0007669"/>
    <property type="project" value="TreeGrafter"/>
</dbReference>
<dbReference type="GO" id="GO:0006096">
    <property type="term" value="P:glycolytic process"/>
    <property type="evidence" value="ECO:0007669"/>
    <property type="project" value="UniProtKB-UniRule"/>
</dbReference>
<dbReference type="CDD" id="cd00311">
    <property type="entry name" value="TIM"/>
    <property type="match status" value="1"/>
</dbReference>
<dbReference type="FunFam" id="3.20.20.70:FF:000016">
    <property type="entry name" value="Triosephosphate isomerase"/>
    <property type="match status" value="1"/>
</dbReference>
<dbReference type="Gene3D" id="3.20.20.70">
    <property type="entry name" value="Aldolase class I"/>
    <property type="match status" value="1"/>
</dbReference>
<dbReference type="HAMAP" id="MF_00147_B">
    <property type="entry name" value="TIM_B"/>
    <property type="match status" value="1"/>
</dbReference>
<dbReference type="InterPro" id="IPR013785">
    <property type="entry name" value="Aldolase_TIM"/>
</dbReference>
<dbReference type="InterPro" id="IPR035990">
    <property type="entry name" value="TIM_sf"/>
</dbReference>
<dbReference type="InterPro" id="IPR022896">
    <property type="entry name" value="TrioseP_Isoase_bac/euk"/>
</dbReference>
<dbReference type="InterPro" id="IPR000652">
    <property type="entry name" value="Triosephosphate_isomerase"/>
</dbReference>
<dbReference type="InterPro" id="IPR020861">
    <property type="entry name" value="Triosephosphate_isomerase_AS"/>
</dbReference>
<dbReference type="NCBIfam" id="TIGR00419">
    <property type="entry name" value="tim"/>
    <property type="match status" value="1"/>
</dbReference>
<dbReference type="PANTHER" id="PTHR21139">
    <property type="entry name" value="TRIOSEPHOSPHATE ISOMERASE"/>
    <property type="match status" value="1"/>
</dbReference>
<dbReference type="PANTHER" id="PTHR21139:SF42">
    <property type="entry name" value="TRIOSEPHOSPHATE ISOMERASE"/>
    <property type="match status" value="1"/>
</dbReference>
<dbReference type="Pfam" id="PF00121">
    <property type="entry name" value="TIM"/>
    <property type="match status" value="1"/>
</dbReference>
<dbReference type="SUPFAM" id="SSF51351">
    <property type="entry name" value="Triosephosphate isomerase (TIM)"/>
    <property type="match status" value="1"/>
</dbReference>
<dbReference type="PROSITE" id="PS00171">
    <property type="entry name" value="TIM_1"/>
    <property type="match status" value="1"/>
</dbReference>
<dbReference type="PROSITE" id="PS51440">
    <property type="entry name" value="TIM_2"/>
    <property type="match status" value="1"/>
</dbReference>